<evidence type="ECO:0000255" key="1">
    <source>
        <dbReference type="HAMAP-Rule" id="MF_00175"/>
    </source>
</evidence>
<evidence type="ECO:0000255" key="2">
    <source>
        <dbReference type="PROSITE-ProRule" id="PRU01250"/>
    </source>
</evidence>
<keyword id="KW-0067">ATP-binding</keyword>
<keyword id="KW-0143">Chaperone</keyword>
<keyword id="KW-0479">Metal-binding</keyword>
<keyword id="KW-0547">Nucleotide-binding</keyword>
<keyword id="KW-0862">Zinc</keyword>
<proteinExistence type="inferred from homology"/>
<name>CLPX_STRA3</name>
<gene>
    <name evidence="1" type="primary">clpX</name>
    <name type="ordered locus">gbs1383</name>
</gene>
<reference key="1">
    <citation type="journal article" date="2002" name="Mol. Microbiol.">
        <title>Genome sequence of Streptococcus agalactiae, a pathogen causing invasive neonatal disease.</title>
        <authorList>
            <person name="Glaser P."/>
            <person name="Rusniok C."/>
            <person name="Buchrieser C."/>
            <person name="Chevalier F."/>
            <person name="Frangeul L."/>
            <person name="Msadek T."/>
            <person name="Zouine M."/>
            <person name="Couve E."/>
            <person name="Lalioui L."/>
            <person name="Poyart C."/>
            <person name="Trieu-Cuot P."/>
            <person name="Kunst F."/>
        </authorList>
    </citation>
    <scope>NUCLEOTIDE SEQUENCE [LARGE SCALE GENOMIC DNA]</scope>
    <source>
        <strain>NEM316</strain>
    </source>
</reference>
<sequence>MAGNRNNDMNVYCSFCGKSQDEVKKIIAGNGVFICNECVALSQEIIKEELAEEVLADLAEVPKPKELLEILNQYVVGQDRAKRALAVAVYNHYKRVSYTESSDDDVDLQKSNILMIGPTGSGKTFLAQTLAKSLNVPFAIADATSLTEAGYVGEDVENILLKLIQAADYNVERAERGIIYVDEIDKIAKKGENVSITRDVSGEGVQQALLKIIEGTVASVPPQGGRKHPNQEMIQINTKNILFIVGGAFDGIEDLVKQRLGEKIIGFGQTSRKIDDNASYMQEIISEDIQKFGLIPEFIGRLPVVAALELLTAEDLVRILTEPRNALVKQYQTLLSYDGVELEFDQDALLAIADKAIERKTGARGLRSIIEETMLDIMFEIPSQEDVTKVRITKAAVEGTDKPVLETA</sequence>
<protein>
    <recommendedName>
        <fullName evidence="1">ATP-dependent Clp protease ATP-binding subunit ClpX</fullName>
    </recommendedName>
</protein>
<accession>Q8E4L8</accession>
<feature type="chain" id="PRO_0000160427" description="ATP-dependent Clp protease ATP-binding subunit ClpX">
    <location>
        <begin position="1"/>
        <end position="408"/>
    </location>
</feature>
<feature type="domain" description="ClpX-type ZB" evidence="2">
    <location>
        <begin position="1"/>
        <end position="54"/>
    </location>
</feature>
<feature type="binding site" evidence="2">
    <location>
        <position position="13"/>
    </location>
    <ligand>
        <name>Zn(2+)</name>
        <dbReference type="ChEBI" id="CHEBI:29105"/>
    </ligand>
</feature>
<feature type="binding site" evidence="2">
    <location>
        <position position="16"/>
    </location>
    <ligand>
        <name>Zn(2+)</name>
        <dbReference type="ChEBI" id="CHEBI:29105"/>
    </ligand>
</feature>
<feature type="binding site" evidence="2">
    <location>
        <position position="35"/>
    </location>
    <ligand>
        <name>Zn(2+)</name>
        <dbReference type="ChEBI" id="CHEBI:29105"/>
    </ligand>
</feature>
<feature type="binding site" evidence="2">
    <location>
        <position position="38"/>
    </location>
    <ligand>
        <name>Zn(2+)</name>
        <dbReference type="ChEBI" id="CHEBI:29105"/>
    </ligand>
</feature>
<feature type="binding site" evidence="1">
    <location>
        <begin position="118"/>
        <end position="125"/>
    </location>
    <ligand>
        <name>ATP</name>
        <dbReference type="ChEBI" id="CHEBI:30616"/>
    </ligand>
</feature>
<dbReference type="EMBL" id="AL766850">
    <property type="protein sequence ID" value="CAD47042.1"/>
    <property type="molecule type" value="Genomic_DNA"/>
</dbReference>
<dbReference type="RefSeq" id="WP_000918412.1">
    <property type="nucleotide sequence ID" value="NC_004368.1"/>
</dbReference>
<dbReference type="SMR" id="Q8E4L8"/>
<dbReference type="KEGG" id="san:gbs1383"/>
<dbReference type="eggNOG" id="COG1219">
    <property type="taxonomic scope" value="Bacteria"/>
</dbReference>
<dbReference type="HOGENOM" id="CLU_014218_8_2_9"/>
<dbReference type="Proteomes" id="UP000000823">
    <property type="component" value="Chromosome"/>
</dbReference>
<dbReference type="GO" id="GO:0009376">
    <property type="term" value="C:HslUV protease complex"/>
    <property type="evidence" value="ECO:0007669"/>
    <property type="project" value="TreeGrafter"/>
</dbReference>
<dbReference type="GO" id="GO:0005524">
    <property type="term" value="F:ATP binding"/>
    <property type="evidence" value="ECO:0007669"/>
    <property type="project" value="UniProtKB-UniRule"/>
</dbReference>
<dbReference type="GO" id="GO:0016887">
    <property type="term" value="F:ATP hydrolysis activity"/>
    <property type="evidence" value="ECO:0007669"/>
    <property type="project" value="InterPro"/>
</dbReference>
<dbReference type="GO" id="GO:0140662">
    <property type="term" value="F:ATP-dependent protein folding chaperone"/>
    <property type="evidence" value="ECO:0007669"/>
    <property type="project" value="InterPro"/>
</dbReference>
<dbReference type="GO" id="GO:0046983">
    <property type="term" value="F:protein dimerization activity"/>
    <property type="evidence" value="ECO:0007669"/>
    <property type="project" value="InterPro"/>
</dbReference>
<dbReference type="GO" id="GO:0051082">
    <property type="term" value="F:unfolded protein binding"/>
    <property type="evidence" value="ECO:0007669"/>
    <property type="project" value="UniProtKB-UniRule"/>
</dbReference>
<dbReference type="GO" id="GO:0008270">
    <property type="term" value="F:zinc ion binding"/>
    <property type="evidence" value="ECO:0007669"/>
    <property type="project" value="InterPro"/>
</dbReference>
<dbReference type="GO" id="GO:0051301">
    <property type="term" value="P:cell division"/>
    <property type="evidence" value="ECO:0007669"/>
    <property type="project" value="TreeGrafter"/>
</dbReference>
<dbReference type="GO" id="GO:0051603">
    <property type="term" value="P:proteolysis involved in protein catabolic process"/>
    <property type="evidence" value="ECO:0007669"/>
    <property type="project" value="TreeGrafter"/>
</dbReference>
<dbReference type="CDD" id="cd19497">
    <property type="entry name" value="RecA-like_ClpX"/>
    <property type="match status" value="1"/>
</dbReference>
<dbReference type="FunFam" id="1.10.8.60:FF:000002">
    <property type="entry name" value="ATP-dependent Clp protease ATP-binding subunit ClpX"/>
    <property type="match status" value="1"/>
</dbReference>
<dbReference type="FunFam" id="3.40.50.300:FF:000005">
    <property type="entry name" value="ATP-dependent Clp protease ATP-binding subunit ClpX"/>
    <property type="match status" value="1"/>
</dbReference>
<dbReference type="Gene3D" id="1.10.8.60">
    <property type="match status" value="1"/>
</dbReference>
<dbReference type="Gene3D" id="6.20.220.10">
    <property type="entry name" value="ClpX chaperone, C4-type zinc finger domain"/>
    <property type="match status" value="1"/>
</dbReference>
<dbReference type="Gene3D" id="3.40.50.300">
    <property type="entry name" value="P-loop containing nucleotide triphosphate hydrolases"/>
    <property type="match status" value="1"/>
</dbReference>
<dbReference type="HAMAP" id="MF_00175">
    <property type="entry name" value="ClpX"/>
    <property type="match status" value="1"/>
</dbReference>
<dbReference type="InterPro" id="IPR003593">
    <property type="entry name" value="AAA+_ATPase"/>
</dbReference>
<dbReference type="InterPro" id="IPR050052">
    <property type="entry name" value="ATP-dep_Clp_protease_ClpX"/>
</dbReference>
<dbReference type="InterPro" id="IPR003959">
    <property type="entry name" value="ATPase_AAA_core"/>
</dbReference>
<dbReference type="InterPro" id="IPR019489">
    <property type="entry name" value="Clp_ATPase_C"/>
</dbReference>
<dbReference type="InterPro" id="IPR004487">
    <property type="entry name" value="Clp_protease_ATP-bd_su_ClpX"/>
</dbReference>
<dbReference type="InterPro" id="IPR046425">
    <property type="entry name" value="ClpX_bact"/>
</dbReference>
<dbReference type="InterPro" id="IPR027417">
    <property type="entry name" value="P-loop_NTPase"/>
</dbReference>
<dbReference type="InterPro" id="IPR010603">
    <property type="entry name" value="Znf_CppX_C4"/>
</dbReference>
<dbReference type="InterPro" id="IPR038366">
    <property type="entry name" value="Znf_CppX_C4_sf"/>
</dbReference>
<dbReference type="NCBIfam" id="TIGR00382">
    <property type="entry name" value="clpX"/>
    <property type="match status" value="1"/>
</dbReference>
<dbReference type="NCBIfam" id="NF003745">
    <property type="entry name" value="PRK05342.1"/>
    <property type="match status" value="1"/>
</dbReference>
<dbReference type="PANTHER" id="PTHR48102:SF7">
    <property type="entry name" value="ATP-DEPENDENT CLP PROTEASE ATP-BINDING SUBUNIT CLPX-LIKE, MITOCHONDRIAL"/>
    <property type="match status" value="1"/>
</dbReference>
<dbReference type="PANTHER" id="PTHR48102">
    <property type="entry name" value="ATP-DEPENDENT CLP PROTEASE ATP-BINDING SUBUNIT CLPX-LIKE, MITOCHONDRIAL-RELATED"/>
    <property type="match status" value="1"/>
</dbReference>
<dbReference type="Pfam" id="PF07724">
    <property type="entry name" value="AAA_2"/>
    <property type="match status" value="1"/>
</dbReference>
<dbReference type="Pfam" id="PF10431">
    <property type="entry name" value="ClpB_D2-small"/>
    <property type="match status" value="1"/>
</dbReference>
<dbReference type="Pfam" id="PF06689">
    <property type="entry name" value="zf-C4_ClpX"/>
    <property type="match status" value="1"/>
</dbReference>
<dbReference type="SMART" id="SM00382">
    <property type="entry name" value="AAA"/>
    <property type="match status" value="1"/>
</dbReference>
<dbReference type="SMART" id="SM01086">
    <property type="entry name" value="ClpB_D2-small"/>
    <property type="match status" value="1"/>
</dbReference>
<dbReference type="SMART" id="SM00994">
    <property type="entry name" value="zf-C4_ClpX"/>
    <property type="match status" value="1"/>
</dbReference>
<dbReference type="SUPFAM" id="SSF57716">
    <property type="entry name" value="Glucocorticoid receptor-like (DNA-binding domain)"/>
    <property type="match status" value="1"/>
</dbReference>
<dbReference type="SUPFAM" id="SSF52540">
    <property type="entry name" value="P-loop containing nucleoside triphosphate hydrolases"/>
    <property type="match status" value="1"/>
</dbReference>
<dbReference type="PROSITE" id="PS51902">
    <property type="entry name" value="CLPX_ZB"/>
    <property type="match status" value="1"/>
</dbReference>
<organism>
    <name type="scientific">Streptococcus agalactiae serotype III (strain NEM316)</name>
    <dbReference type="NCBI Taxonomy" id="211110"/>
    <lineage>
        <taxon>Bacteria</taxon>
        <taxon>Bacillati</taxon>
        <taxon>Bacillota</taxon>
        <taxon>Bacilli</taxon>
        <taxon>Lactobacillales</taxon>
        <taxon>Streptococcaceae</taxon>
        <taxon>Streptococcus</taxon>
    </lineage>
</organism>
<comment type="function">
    <text evidence="1">ATP-dependent specificity component of the Clp protease. It directs the protease to specific substrates. Can perform chaperone functions in the absence of ClpP.</text>
</comment>
<comment type="subunit">
    <text evidence="1">Component of the ClpX-ClpP complex. Forms a hexameric ring that, in the presence of ATP, binds to fourteen ClpP subunits assembled into a disk-like structure with a central cavity, resembling the structure of eukaryotic proteasomes.</text>
</comment>
<comment type="similarity">
    <text evidence="1">Belongs to the ClpX chaperone family.</text>
</comment>